<evidence type="ECO:0000255" key="1">
    <source>
        <dbReference type="HAMAP-Rule" id="MF_00148"/>
    </source>
</evidence>
<sequence length="227" mass="26514">MKNIYKISWLDFFLIEKKKEYFLYLLNKIKNIRRNTIVYPKKNMVFNAFLFTPLSSIKVVILGQDPYHSAGQAHGLSFSVPKGVFLPPSLKNIFIELKNNFSFYKKNIHGCLESWAKQGVFLLNSILTVSKGIPNSHKNLGWEIFTDQVIKFISDICKGVVFLLWGNISQKKYYLIDSKKHFILRSTHPSPLSCYKGFFGCNHFFKTNVLLQNQKKKPINWFLDLFE</sequence>
<protein>
    <recommendedName>
        <fullName evidence="1">Uracil-DNA glycosylase</fullName>
        <shortName evidence="1">UDG</shortName>
        <ecNumber evidence="1">3.2.2.27</ecNumber>
    </recommendedName>
</protein>
<accession>Q057V4</accession>
<proteinExistence type="inferred from homology"/>
<organism>
    <name type="scientific">Buchnera aphidicola subsp. Cinara cedri (strain Cc)</name>
    <dbReference type="NCBI Taxonomy" id="372461"/>
    <lineage>
        <taxon>Bacteria</taxon>
        <taxon>Pseudomonadati</taxon>
        <taxon>Pseudomonadota</taxon>
        <taxon>Gammaproteobacteria</taxon>
        <taxon>Enterobacterales</taxon>
        <taxon>Erwiniaceae</taxon>
        <taxon>Buchnera</taxon>
    </lineage>
</organism>
<feature type="chain" id="PRO_1000009870" description="Uracil-DNA glycosylase">
    <location>
        <begin position="1"/>
        <end position="227"/>
    </location>
</feature>
<feature type="active site" description="Proton acceptor" evidence="1">
    <location>
        <position position="65"/>
    </location>
</feature>
<name>UNG_BUCCC</name>
<gene>
    <name evidence="1" type="primary">ung</name>
    <name type="ordered locus">BCc_118</name>
</gene>
<reference key="1">
    <citation type="journal article" date="2006" name="Science">
        <title>A small microbial genome: the end of a long symbiotic relationship?</title>
        <authorList>
            <person name="Perez-Brocal V."/>
            <person name="Gil R."/>
            <person name="Ramos S."/>
            <person name="Lamelas A."/>
            <person name="Postigo M."/>
            <person name="Michelena J.M."/>
            <person name="Silva F.J."/>
            <person name="Moya A."/>
            <person name="Latorre A."/>
        </authorList>
    </citation>
    <scope>NUCLEOTIDE SEQUENCE [LARGE SCALE GENOMIC DNA]</scope>
    <source>
        <strain>Cc</strain>
    </source>
</reference>
<comment type="function">
    <text evidence="1">Excises uracil residues from the DNA which can arise as a result of misincorporation of dUMP residues by DNA polymerase or due to deamination of cytosine.</text>
</comment>
<comment type="catalytic activity">
    <reaction evidence="1">
        <text>Hydrolyzes single-stranded DNA or mismatched double-stranded DNA and polynucleotides, releasing free uracil.</text>
        <dbReference type="EC" id="3.2.2.27"/>
    </reaction>
</comment>
<comment type="subcellular location">
    <subcellularLocation>
        <location evidence="1">Cytoplasm</location>
    </subcellularLocation>
</comment>
<comment type="similarity">
    <text evidence="1">Belongs to the uracil-DNA glycosylase (UDG) superfamily. UNG family.</text>
</comment>
<dbReference type="EC" id="3.2.2.27" evidence="1"/>
<dbReference type="EMBL" id="CP000263">
    <property type="protein sequence ID" value="ABJ90595.1"/>
    <property type="molecule type" value="Genomic_DNA"/>
</dbReference>
<dbReference type="RefSeq" id="WP_011672514.1">
    <property type="nucleotide sequence ID" value="NC_008513.1"/>
</dbReference>
<dbReference type="SMR" id="Q057V4"/>
<dbReference type="STRING" id="372461.BCc_118"/>
<dbReference type="KEGG" id="bcc:BCc_118"/>
<dbReference type="eggNOG" id="COG0692">
    <property type="taxonomic scope" value="Bacteria"/>
</dbReference>
<dbReference type="HOGENOM" id="CLU_032162_3_1_6"/>
<dbReference type="OrthoDB" id="9804372at2"/>
<dbReference type="Proteomes" id="UP000000669">
    <property type="component" value="Chromosome"/>
</dbReference>
<dbReference type="GO" id="GO:0005737">
    <property type="term" value="C:cytoplasm"/>
    <property type="evidence" value="ECO:0007669"/>
    <property type="project" value="UniProtKB-SubCell"/>
</dbReference>
<dbReference type="GO" id="GO:0004844">
    <property type="term" value="F:uracil DNA N-glycosylase activity"/>
    <property type="evidence" value="ECO:0007669"/>
    <property type="project" value="UniProtKB-UniRule"/>
</dbReference>
<dbReference type="GO" id="GO:0097510">
    <property type="term" value="P:base-excision repair, AP site formation via deaminated base removal"/>
    <property type="evidence" value="ECO:0007669"/>
    <property type="project" value="TreeGrafter"/>
</dbReference>
<dbReference type="CDD" id="cd10027">
    <property type="entry name" value="UDG-F1-like"/>
    <property type="match status" value="1"/>
</dbReference>
<dbReference type="FunFam" id="3.40.470.10:FF:000001">
    <property type="entry name" value="Uracil-DNA glycosylase"/>
    <property type="match status" value="1"/>
</dbReference>
<dbReference type="Gene3D" id="3.40.470.10">
    <property type="entry name" value="Uracil-DNA glycosylase-like domain"/>
    <property type="match status" value="1"/>
</dbReference>
<dbReference type="HAMAP" id="MF_00148">
    <property type="entry name" value="UDG"/>
    <property type="match status" value="1"/>
</dbReference>
<dbReference type="InterPro" id="IPR002043">
    <property type="entry name" value="UDG_fam1"/>
</dbReference>
<dbReference type="InterPro" id="IPR018085">
    <property type="entry name" value="Ura-DNA_Glyclase_AS"/>
</dbReference>
<dbReference type="InterPro" id="IPR005122">
    <property type="entry name" value="Uracil-DNA_glycosylase-like"/>
</dbReference>
<dbReference type="InterPro" id="IPR036895">
    <property type="entry name" value="Uracil-DNA_glycosylase-like_sf"/>
</dbReference>
<dbReference type="NCBIfam" id="NF003588">
    <property type="entry name" value="PRK05254.1-1"/>
    <property type="match status" value="1"/>
</dbReference>
<dbReference type="NCBIfam" id="NF003589">
    <property type="entry name" value="PRK05254.1-2"/>
    <property type="match status" value="1"/>
</dbReference>
<dbReference type="NCBIfam" id="NF003592">
    <property type="entry name" value="PRK05254.1-5"/>
    <property type="match status" value="1"/>
</dbReference>
<dbReference type="NCBIfam" id="TIGR00628">
    <property type="entry name" value="ung"/>
    <property type="match status" value="1"/>
</dbReference>
<dbReference type="PANTHER" id="PTHR11264">
    <property type="entry name" value="URACIL-DNA GLYCOSYLASE"/>
    <property type="match status" value="1"/>
</dbReference>
<dbReference type="PANTHER" id="PTHR11264:SF0">
    <property type="entry name" value="URACIL-DNA GLYCOSYLASE"/>
    <property type="match status" value="1"/>
</dbReference>
<dbReference type="Pfam" id="PF03167">
    <property type="entry name" value="UDG"/>
    <property type="match status" value="1"/>
</dbReference>
<dbReference type="SMART" id="SM00986">
    <property type="entry name" value="UDG"/>
    <property type="match status" value="1"/>
</dbReference>
<dbReference type="SMART" id="SM00987">
    <property type="entry name" value="UreE_C"/>
    <property type="match status" value="1"/>
</dbReference>
<dbReference type="SUPFAM" id="SSF52141">
    <property type="entry name" value="Uracil-DNA glycosylase-like"/>
    <property type="match status" value="1"/>
</dbReference>
<dbReference type="PROSITE" id="PS00130">
    <property type="entry name" value="U_DNA_GLYCOSYLASE"/>
    <property type="match status" value="1"/>
</dbReference>
<keyword id="KW-0963">Cytoplasm</keyword>
<keyword id="KW-0227">DNA damage</keyword>
<keyword id="KW-0234">DNA repair</keyword>
<keyword id="KW-0378">Hydrolase</keyword>
<keyword id="KW-1185">Reference proteome</keyword>